<keyword id="KW-0025">Alternative splicing</keyword>
<keyword id="KW-0966">Cell projection</keyword>
<keyword id="KW-0969">Cilium</keyword>
<keyword id="KW-0970">Cilium biogenesis/degradation</keyword>
<keyword id="KW-0963">Cytoplasm</keyword>
<keyword id="KW-0206">Cytoskeleton</keyword>
<keyword id="KW-0243">Dynein</keyword>
<keyword id="KW-0493">Microtubule</keyword>
<keyword id="KW-0505">Motor protein</keyword>
<keyword id="KW-1185">Reference proteome</keyword>
<keyword id="KW-0677">Repeat</keyword>
<keyword id="KW-0853">WD repeat</keyword>
<protein>
    <recommendedName>
        <fullName>Dynein axonemal intermediate chain 2</fullName>
    </recommendedName>
    <alternativeName>
        <fullName>Axonemal dynein intermediate chain 2</fullName>
    </alternativeName>
</protein>
<name>DNAI2_MOUSE</name>
<feature type="chain" id="PRO_0000365816" description="Dynein axonemal intermediate chain 2">
    <location>
        <begin position="1"/>
        <end position="623"/>
    </location>
</feature>
<feature type="repeat" description="WD 1">
    <location>
        <begin position="214"/>
        <end position="254"/>
    </location>
</feature>
<feature type="repeat" description="WD 2">
    <location>
        <begin position="261"/>
        <end position="302"/>
    </location>
</feature>
<feature type="repeat" description="WD 3">
    <location>
        <begin position="362"/>
        <end position="401"/>
    </location>
</feature>
<feature type="repeat" description="WD 4">
    <location>
        <begin position="405"/>
        <end position="445"/>
    </location>
</feature>
<feature type="repeat" description="WD 5">
    <location>
        <begin position="450"/>
        <end position="489"/>
    </location>
</feature>
<feature type="region of interest" description="Disordered" evidence="4">
    <location>
        <begin position="565"/>
        <end position="602"/>
    </location>
</feature>
<feature type="compositionally biased region" description="Basic residues" evidence="4">
    <location>
        <begin position="570"/>
        <end position="579"/>
    </location>
</feature>
<feature type="compositionally biased region" description="Acidic residues" evidence="4">
    <location>
        <begin position="584"/>
        <end position="598"/>
    </location>
</feature>
<feature type="splice variant" id="VSP_036542" description="In isoform 2." evidence="9">
    <location>
        <begin position="450"/>
        <end position="461"/>
    </location>
</feature>
<comment type="function">
    <text evidence="1">Part of the dynein complex of respiratory cilia.</text>
</comment>
<comment type="subunit">
    <text evidence="3 6 7 8 9">Consists of at least two heavy chains and a number of intermediate and light chains (Probable). Interacts with DNAAF2 (PubMed:19052621). Interacts with DNAAF6/PIH1D3 (PubMed:24421334). Interacts with HEATR2; probably involved in outer arm dynein assembly (By similarity). Interacts with CFAP53 (PubMed:33347437).</text>
</comment>
<comment type="interaction">
    <interactant intactId="EBI-15744757">
        <id>A2AC93</id>
    </interactant>
    <interactant intactId="EBI-15744709">
        <id>Q8BPI1</id>
        <label>Dnaaf2</label>
    </interactant>
    <organismsDiffer>false</organismsDiffer>
    <experiments>2</experiments>
</comment>
<comment type="subcellular location">
    <subcellularLocation>
        <location evidence="3">Cytoplasm</location>
        <location evidence="3">Cytoskeleton</location>
        <location evidence="3">Cilium axoneme</location>
    </subcellularLocation>
    <subcellularLocation>
        <location evidence="2">Dynein axonemal particle</location>
    </subcellularLocation>
    <text evidence="3">Located in the proximal region of respiratory cilia.</text>
</comment>
<comment type="alternative products">
    <event type="alternative splicing"/>
    <isoform>
        <id>A2AC93-1</id>
        <name>1</name>
        <sequence type="displayed"/>
    </isoform>
    <isoform>
        <id>A2AC93-2</id>
        <name>2</name>
        <sequence type="described" ref="VSP_036542"/>
    </isoform>
</comment>
<comment type="tissue specificity">
    <text evidence="5">Predominantly expressed in ovary, testis and lung.</text>
</comment>
<comment type="developmental stage">
    <text evidence="5">In ovaries, it is detected at high levels in vivo on day 10, with a subsequent decrease on days 15 and 20, in adult and old ovaries. Weakly expressed on day 5.</text>
</comment>
<comment type="similarity">
    <text evidence="9">Belongs to the dynein intermediate chain family.</text>
</comment>
<comment type="sequence caution" evidence="9">
    <conflict type="erroneous gene model prediction">
        <sequence resource="EMBL-CDS" id="CAM19252"/>
    </conflict>
</comment>
<reference key="1">
    <citation type="journal article" date="2008" name="DNA Cell Biol.">
        <title>Mouse dynein axonemal intermediate chain 2: cloning and expression.</title>
        <authorList>
            <person name="Yang Z."/>
            <person name="Wu J."/>
        </authorList>
    </citation>
    <scope>NUCLEOTIDE SEQUENCE [MRNA] (ISOFORM 1)</scope>
    <scope>TISSUE SPECIFICITY</scope>
    <scope>DEVELOPMENTAL STAGE</scope>
    <source>
        <strain>C57BL/6J</strain>
        <tissue>Ovary</tissue>
    </source>
</reference>
<reference key="2">
    <citation type="journal article" date="2009" name="PLoS Biol.">
        <title>Lineage-specific biology revealed by a finished genome assembly of the mouse.</title>
        <authorList>
            <person name="Church D.M."/>
            <person name="Goodstadt L."/>
            <person name="Hillier L.W."/>
            <person name="Zody M.C."/>
            <person name="Goldstein S."/>
            <person name="She X."/>
            <person name="Bult C.J."/>
            <person name="Agarwala R."/>
            <person name="Cherry J.L."/>
            <person name="DiCuccio M."/>
            <person name="Hlavina W."/>
            <person name="Kapustin Y."/>
            <person name="Meric P."/>
            <person name="Maglott D."/>
            <person name="Birtle Z."/>
            <person name="Marques A.C."/>
            <person name="Graves T."/>
            <person name="Zhou S."/>
            <person name="Teague B."/>
            <person name="Potamousis K."/>
            <person name="Churas C."/>
            <person name="Place M."/>
            <person name="Herschleb J."/>
            <person name="Runnheim R."/>
            <person name="Forrest D."/>
            <person name="Amos-Landgraf J."/>
            <person name="Schwartz D.C."/>
            <person name="Cheng Z."/>
            <person name="Lindblad-Toh K."/>
            <person name="Eichler E.E."/>
            <person name="Ponting C.P."/>
        </authorList>
    </citation>
    <scope>NUCLEOTIDE SEQUENCE [LARGE SCALE GENOMIC DNA]</scope>
    <source>
        <strain>C57BL/6J</strain>
    </source>
</reference>
<reference key="3">
    <citation type="submission" date="2005-07" db="EMBL/GenBank/DDBJ databases">
        <authorList>
            <person name="Mural R.J."/>
            <person name="Adams M.D."/>
            <person name="Myers E.W."/>
            <person name="Smith H.O."/>
            <person name="Venter J.C."/>
        </authorList>
    </citation>
    <scope>NUCLEOTIDE SEQUENCE [LARGE SCALE GENOMIC DNA]</scope>
</reference>
<reference key="4">
    <citation type="journal article" date="2008" name="Nature">
        <title>Ktu/PF13 is required for cytoplasmic pre-assembly of axonemal dyneins.</title>
        <authorList>
            <person name="Omran H."/>
            <person name="Kobayashi D."/>
            <person name="Olbrich H."/>
            <person name="Tsukahara T."/>
            <person name="Loges N.T."/>
            <person name="Hagiwara H."/>
            <person name="Zhang Q."/>
            <person name="Leblond G."/>
            <person name="O'Toole E."/>
            <person name="Hara C."/>
            <person name="Mizuno H."/>
            <person name="Kawano H."/>
            <person name="Fliegauf M."/>
            <person name="Yagi T."/>
            <person name="Koshida S."/>
            <person name="Miyawaki A."/>
            <person name="Zentgraf H."/>
            <person name="Seithe H."/>
            <person name="Reinhardt R."/>
            <person name="Watanabe Y."/>
            <person name="Kamiya R."/>
            <person name="Mitchell D.R."/>
            <person name="Takeda H."/>
        </authorList>
    </citation>
    <scope>INTERACTION WITH DNAAF2</scope>
</reference>
<reference key="5">
    <citation type="journal article" date="2010" name="Cell">
        <title>A tissue-specific atlas of mouse protein phosphorylation and expression.</title>
        <authorList>
            <person name="Huttlin E.L."/>
            <person name="Jedrychowski M.P."/>
            <person name="Elias J.E."/>
            <person name="Goswami T."/>
            <person name="Rad R."/>
            <person name="Beausoleil S.A."/>
            <person name="Villen J."/>
            <person name="Haas W."/>
            <person name="Sowa M.E."/>
            <person name="Gygi S.P."/>
        </authorList>
    </citation>
    <scope>IDENTIFICATION BY MASS SPECTROMETRY [LARGE SCALE ANALYSIS]</scope>
    <source>
        <tissue>Testis</tissue>
    </source>
</reference>
<reference key="6">
    <citation type="journal article" date="2014" name="J. Cell Biol.">
        <title>Pih1d3 is required for cytoplasmic preassembly of axonemal dynein in mouse sperm.</title>
        <authorList>
            <person name="Dong F."/>
            <person name="Shinohara K."/>
            <person name="Botilde Y."/>
            <person name="Nabeshima R."/>
            <person name="Asai Y."/>
            <person name="Fukumoto A."/>
            <person name="Hasegawa T."/>
            <person name="Matsuo M."/>
            <person name="Takeda H."/>
            <person name="Shiratori H."/>
            <person name="Nakamura T."/>
            <person name="Hamada H."/>
        </authorList>
    </citation>
    <scope>INTERACTION WITH DNAAF6</scope>
</reference>
<reference key="7">
    <citation type="journal article" date="2020" name="PLoS Genet.">
        <title>CFAP53 regulates mammalian cilia-type motility patterns through differential localization and recruitment of axonemal dynein components.</title>
        <authorList>
            <person name="Ide T."/>
            <person name="Twan W.K."/>
            <person name="Lu H."/>
            <person name="Ikawa Y."/>
            <person name="Lim L.X."/>
            <person name="Henninger N."/>
            <person name="Nishimura H."/>
            <person name="Takaoka K."/>
            <person name="Narasimhan V."/>
            <person name="Yan X."/>
            <person name="Shiratori H."/>
            <person name="Roy S."/>
            <person name="Hamada H."/>
        </authorList>
    </citation>
    <scope>INTERACTION WITH CFAP53</scope>
</reference>
<sequence length="623" mass="70968">MEIVYVYLKKRSEFGKQCNFSDRQAELNIDILPNPELAALYVERNPVDTGIQCSASMSEHEANTERFEMESCGVNHVEGGWPKDVNPQELEQTIRFRKKVEKDENYINAVMQLGSIMEHCIKQNNAIDIYEEYFDDEEAVEVTEEAPSAKTINVFRDPQEIKRTATHLSWHPDGNRKLAVAYSCLKFQRAPMSMNYDSYIWDLENPNRPEIALKPLSPLVTLEYNPKDSHVLLGGCYNGQIACWDTRKGSLVAELSTIEFSHRDPVYGTIWLQSKTGTECFSASTDGQVMWWDIRKISEPIEVVIMDISRKEQLENALGAISLEFESTLPTKFMVGTEQGIVISCNRKAKTQAEKIVCTFYGHHGPIYALQRNPFYPKNFLTVGDWTARIWSEDSRESSIMWTKYHMAYLSDGAWSPVRPAVFFTTKMDGTLDIWDLVFKQCDPALSLKVCDDPLFCLRVQDNGCLIACGSELGTTTLLEVSSSLSTLQRNEKNIASSIFERETRREKILEARHREMRLKEKGKVEGKEDDQKEEEAALDLDELVGKAEEEFFEVIFSELKRKEAEALKKKPKPRKKSSVKVEAEEEVEENVGEEEEAGGIIGIDAVEDMSEEAGEEQEDVPT</sequence>
<evidence type="ECO:0000250" key="1"/>
<evidence type="ECO:0000250" key="2">
    <source>
        <dbReference type="UniProtKB" id="Q4QR00"/>
    </source>
</evidence>
<evidence type="ECO:0000250" key="3">
    <source>
        <dbReference type="UniProtKB" id="Q9GZS0"/>
    </source>
</evidence>
<evidence type="ECO:0000256" key="4">
    <source>
        <dbReference type="SAM" id="MobiDB-lite"/>
    </source>
</evidence>
<evidence type="ECO:0000269" key="5">
    <source>
    </source>
</evidence>
<evidence type="ECO:0000269" key="6">
    <source>
    </source>
</evidence>
<evidence type="ECO:0000269" key="7">
    <source>
    </source>
</evidence>
<evidence type="ECO:0000269" key="8">
    <source>
    </source>
</evidence>
<evidence type="ECO:0000305" key="9"/>
<accession>A2AC93</accession>
<accession>A2AC94</accession>
<dbReference type="EMBL" id="EF565270">
    <property type="protein sequence ID" value="ABU62629.1"/>
    <property type="molecule type" value="mRNA"/>
</dbReference>
<dbReference type="EMBL" id="AL663079">
    <property type="protein sequence ID" value="CAM19252.1"/>
    <property type="status" value="ALT_SEQ"/>
    <property type="molecule type" value="Genomic_DNA"/>
</dbReference>
<dbReference type="EMBL" id="AL663079">
    <property type="protein sequence ID" value="CAM19253.1"/>
    <property type="molecule type" value="Genomic_DNA"/>
</dbReference>
<dbReference type="EMBL" id="CH466558">
    <property type="protein sequence ID" value="EDL34441.1"/>
    <property type="molecule type" value="Genomic_DNA"/>
</dbReference>
<dbReference type="CCDS" id="CCDS36366.1">
    <molecule id="A2AC93-1"/>
</dbReference>
<dbReference type="RefSeq" id="NP_001030050.2">
    <molecule id="A2AC93-1"/>
    <property type="nucleotide sequence ID" value="NM_001034878.3"/>
</dbReference>
<dbReference type="RefSeq" id="XP_006533723.1">
    <molecule id="A2AC93-1"/>
    <property type="nucleotide sequence ID" value="XM_006533660.4"/>
</dbReference>
<dbReference type="RefSeq" id="XP_006533724.1">
    <molecule id="A2AC93-1"/>
    <property type="nucleotide sequence ID" value="XM_006533661.2"/>
</dbReference>
<dbReference type="RefSeq" id="XP_006533725.1">
    <property type="nucleotide sequence ID" value="XM_006533662.3"/>
</dbReference>
<dbReference type="RefSeq" id="XP_036012716.1">
    <molecule id="A2AC93-1"/>
    <property type="nucleotide sequence ID" value="XM_036156823.1"/>
</dbReference>
<dbReference type="SMR" id="A2AC93"/>
<dbReference type="DIP" id="DIP-59778N"/>
<dbReference type="FunCoup" id="A2AC93">
    <property type="interactions" value="77"/>
</dbReference>
<dbReference type="IntAct" id="A2AC93">
    <property type="interactions" value="1"/>
</dbReference>
<dbReference type="STRING" id="10090.ENSMUSP00000065787"/>
<dbReference type="iPTMnet" id="A2AC93"/>
<dbReference type="PhosphoSitePlus" id="A2AC93"/>
<dbReference type="SwissPalm" id="A2AC93"/>
<dbReference type="PaxDb" id="10090-ENSMUSP00000065787"/>
<dbReference type="ProteomicsDB" id="279453">
    <molecule id="A2AC93-1"/>
</dbReference>
<dbReference type="ProteomicsDB" id="279454">
    <molecule id="A2AC93-2"/>
</dbReference>
<dbReference type="Antibodypedia" id="31949">
    <property type="antibodies" value="218 antibodies from 29 providers"/>
</dbReference>
<dbReference type="DNASU" id="432611"/>
<dbReference type="Ensembl" id="ENSMUST00000069325.14">
    <molecule id="A2AC93-1"/>
    <property type="protein sequence ID" value="ENSMUSP00000065787.8"/>
    <property type="gene ID" value="ENSMUSG00000034706.17"/>
</dbReference>
<dbReference type="Ensembl" id="ENSMUST00000092469.11">
    <molecule id="A2AC93-1"/>
    <property type="protein sequence ID" value="ENSMUSP00000090126.5"/>
    <property type="gene ID" value="ENSMUSG00000034706.17"/>
</dbReference>
<dbReference type="GeneID" id="432611"/>
<dbReference type="KEGG" id="mmu:432611"/>
<dbReference type="UCSC" id="uc007mfn.1">
    <molecule id="A2AC93-1"/>
    <property type="organism name" value="mouse"/>
</dbReference>
<dbReference type="AGR" id="MGI:2685574"/>
<dbReference type="CTD" id="64446"/>
<dbReference type="MGI" id="MGI:2685574">
    <property type="gene designation" value="Dnai2"/>
</dbReference>
<dbReference type="VEuPathDB" id="HostDB:ENSMUSG00000034706"/>
<dbReference type="eggNOG" id="KOG1587">
    <property type="taxonomic scope" value="Eukaryota"/>
</dbReference>
<dbReference type="GeneTree" id="ENSGT00940000161939"/>
<dbReference type="InParanoid" id="A2AC93"/>
<dbReference type="OMA" id="WDFFYRQ"/>
<dbReference type="OrthoDB" id="366230at2759"/>
<dbReference type="PhylomeDB" id="A2AC93"/>
<dbReference type="TreeFam" id="TF300553"/>
<dbReference type="BioGRID-ORCS" id="432611">
    <property type="hits" value="4 hits in 75 CRISPR screens"/>
</dbReference>
<dbReference type="PRO" id="PR:A2AC93"/>
<dbReference type="Proteomes" id="UP000000589">
    <property type="component" value="Chromosome 11"/>
</dbReference>
<dbReference type="RNAct" id="A2AC93">
    <property type="molecule type" value="protein"/>
</dbReference>
<dbReference type="Bgee" id="ENSMUSG00000034706">
    <property type="expression patterns" value="Expressed in spermatid and 83 other cell types or tissues"/>
</dbReference>
<dbReference type="ExpressionAtlas" id="A2AC93">
    <property type="expression patterns" value="baseline and differential"/>
</dbReference>
<dbReference type="GO" id="GO:0097729">
    <property type="term" value="C:9+2 motile cilium"/>
    <property type="evidence" value="ECO:0000314"/>
    <property type="project" value="MGI"/>
</dbReference>
<dbReference type="GO" id="GO:0005858">
    <property type="term" value="C:axonemal dynein complex"/>
    <property type="evidence" value="ECO:0000266"/>
    <property type="project" value="MGI"/>
</dbReference>
<dbReference type="GO" id="GO:0005930">
    <property type="term" value="C:axoneme"/>
    <property type="evidence" value="ECO:0000314"/>
    <property type="project" value="MGI"/>
</dbReference>
<dbReference type="GO" id="GO:0005929">
    <property type="term" value="C:cilium"/>
    <property type="evidence" value="ECO:0000314"/>
    <property type="project" value="MGI"/>
</dbReference>
<dbReference type="GO" id="GO:0005737">
    <property type="term" value="C:cytoplasm"/>
    <property type="evidence" value="ECO:0000314"/>
    <property type="project" value="MGI"/>
</dbReference>
<dbReference type="GO" id="GO:0120293">
    <property type="term" value="C:dynein axonemal particle"/>
    <property type="evidence" value="ECO:0000250"/>
    <property type="project" value="UniProtKB"/>
</dbReference>
<dbReference type="GO" id="GO:0009897">
    <property type="term" value="C:external side of plasma membrane"/>
    <property type="evidence" value="ECO:0000314"/>
    <property type="project" value="MGI"/>
</dbReference>
<dbReference type="GO" id="GO:0097386">
    <property type="term" value="C:glial cell projection"/>
    <property type="evidence" value="ECO:0000314"/>
    <property type="project" value="MGI"/>
</dbReference>
<dbReference type="GO" id="GO:0005874">
    <property type="term" value="C:microtubule"/>
    <property type="evidence" value="ECO:0007669"/>
    <property type="project" value="UniProtKB-KW"/>
</dbReference>
<dbReference type="GO" id="GO:0036157">
    <property type="term" value="C:outer dynein arm"/>
    <property type="evidence" value="ECO:0007669"/>
    <property type="project" value="Ensembl"/>
</dbReference>
<dbReference type="GO" id="GO:0036126">
    <property type="term" value="C:sperm flagellum"/>
    <property type="evidence" value="ECO:0007669"/>
    <property type="project" value="Ensembl"/>
</dbReference>
<dbReference type="GO" id="GO:0003777">
    <property type="term" value="F:microtubule motor activity"/>
    <property type="evidence" value="ECO:0000266"/>
    <property type="project" value="MGI"/>
</dbReference>
<dbReference type="GO" id="GO:0060271">
    <property type="term" value="P:cilium assembly"/>
    <property type="evidence" value="ECO:0000266"/>
    <property type="project" value="MGI"/>
</dbReference>
<dbReference type="GO" id="GO:0003341">
    <property type="term" value="P:cilium movement"/>
    <property type="evidence" value="ECO:0007669"/>
    <property type="project" value="Ensembl"/>
</dbReference>
<dbReference type="GO" id="GO:0007368">
    <property type="term" value="P:determination of left/right symmetry"/>
    <property type="evidence" value="ECO:0007669"/>
    <property type="project" value="Ensembl"/>
</dbReference>
<dbReference type="GO" id="GO:0036158">
    <property type="term" value="P:outer dynein arm assembly"/>
    <property type="evidence" value="ECO:0007669"/>
    <property type="project" value="Ensembl"/>
</dbReference>
<dbReference type="FunFam" id="2.130.10.10:FF:000380">
    <property type="entry name" value="Dynein intermediate chain 2, axonemal"/>
    <property type="match status" value="1"/>
</dbReference>
<dbReference type="FunFam" id="2.130.10.10:FF:000371">
    <property type="entry name" value="dynein intermediate chain 2, axonemal"/>
    <property type="match status" value="1"/>
</dbReference>
<dbReference type="Gene3D" id="2.130.10.10">
    <property type="entry name" value="YVTN repeat-like/Quinoprotein amine dehydrogenase"/>
    <property type="match status" value="2"/>
</dbReference>
<dbReference type="InterPro" id="IPR050687">
    <property type="entry name" value="Dynein_IC"/>
</dbReference>
<dbReference type="InterPro" id="IPR015943">
    <property type="entry name" value="WD40/YVTN_repeat-like_dom_sf"/>
</dbReference>
<dbReference type="InterPro" id="IPR036322">
    <property type="entry name" value="WD40_repeat_dom_sf"/>
</dbReference>
<dbReference type="InterPro" id="IPR001680">
    <property type="entry name" value="WD40_rpt"/>
</dbReference>
<dbReference type="PANTHER" id="PTHR12442:SF7">
    <property type="entry name" value="DYNEIN AXONEMAL INTERMEDIATE CHAIN 2"/>
    <property type="match status" value="1"/>
</dbReference>
<dbReference type="PANTHER" id="PTHR12442">
    <property type="entry name" value="DYNEIN INTERMEDIATE CHAIN"/>
    <property type="match status" value="1"/>
</dbReference>
<dbReference type="Pfam" id="PF00400">
    <property type="entry name" value="WD40"/>
    <property type="match status" value="1"/>
</dbReference>
<dbReference type="SMART" id="SM00320">
    <property type="entry name" value="WD40"/>
    <property type="match status" value="5"/>
</dbReference>
<dbReference type="SUPFAM" id="SSF50978">
    <property type="entry name" value="WD40 repeat-like"/>
    <property type="match status" value="1"/>
</dbReference>
<dbReference type="PROSITE" id="PS50294">
    <property type="entry name" value="WD_REPEATS_REGION"/>
    <property type="match status" value="2"/>
</dbReference>
<organism>
    <name type="scientific">Mus musculus</name>
    <name type="common">Mouse</name>
    <dbReference type="NCBI Taxonomy" id="10090"/>
    <lineage>
        <taxon>Eukaryota</taxon>
        <taxon>Metazoa</taxon>
        <taxon>Chordata</taxon>
        <taxon>Craniata</taxon>
        <taxon>Vertebrata</taxon>
        <taxon>Euteleostomi</taxon>
        <taxon>Mammalia</taxon>
        <taxon>Eutheria</taxon>
        <taxon>Euarchontoglires</taxon>
        <taxon>Glires</taxon>
        <taxon>Rodentia</taxon>
        <taxon>Myomorpha</taxon>
        <taxon>Muroidea</taxon>
        <taxon>Muridae</taxon>
        <taxon>Murinae</taxon>
        <taxon>Mus</taxon>
        <taxon>Mus</taxon>
    </lineage>
</organism>
<gene>
    <name type="primary">Dnai2</name>
    <name type="synonym">Dnaic2</name>
</gene>
<proteinExistence type="evidence at protein level"/>